<dbReference type="EMBL" id="L77117">
    <property type="protein sequence ID" value="AAB99012.1"/>
    <property type="molecule type" value="Genomic_DNA"/>
</dbReference>
<dbReference type="PIR" id="B64426">
    <property type="entry name" value="B64426"/>
</dbReference>
<dbReference type="RefSeq" id="WP_010870524.1">
    <property type="nucleotide sequence ID" value="NC_000909.1"/>
</dbReference>
<dbReference type="SMR" id="Q58417"/>
<dbReference type="STRING" id="243232.MJ_1011"/>
<dbReference type="PaxDb" id="243232-MJ_1011"/>
<dbReference type="DNASU" id="1451908"/>
<dbReference type="EnsemblBacteria" id="AAB99012">
    <property type="protein sequence ID" value="AAB99012"/>
    <property type="gene ID" value="MJ_1011"/>
</dbReference>
<dbReference type="GeneID" id="1451908"/>
<dbReference type="KEGG" id="mja:MJ_1011"/>
<dbReference type="eggNOG" id="arCOG00232">
    <property type="taxonomic scope" value="Archaea"/>
</dbReference>
<dbReference type="HOGENOM" id="CLU_1933262_0_0_2"/>
<dbReference type="InParanoid" id="Q58417"/>
<dbReference type="OrthoDB" id="376922at2157"/>
<dbReference type="PhylomeDB" id="Q58417"/>
<dbReference type="Proteomes" id="UP000000805">
    <property type="component" value="Chromosome"/>
</dbReference>
<dbReference type="Gene3D" id="1.20.58.220">
    <property type="entry name" value="Phosphate transport system protein phou homolog 2, domain 2"/>
    <property type="match status" value="1"/>
</dbReference>
<dbReference type="InterPro" id="IPR038078">
    <property type="entry name" value="PhoU-like_sf"/>
</dbReference>
<dbReference type="InterPro" id="IPR026022">
    <property type="entry name" value="PhoU_dom"/>
</dbReference>
<dbReference type="Pfam" id="PF01895">
    <property type="entry name" value="PhoU"/>
    <property type="match status" value="1"/>
</dbReference>
<dbReference type="SUPFAM" id="SSF109755">
    <property type="entry name" value="PhoU-like"/>
    <property type="match status" value="1"/>
</dbReference>
<name>Y1011_METJA</name>
<accession>Q58417</accession>
<organism>
    <name type="scientific">Methanocaldococcus jannaschii (strain ATCC 43067 / DSM 2661 / JAL-1 / JCM 10045 / NBRC 100440)</name>
    <name type="common">Methanococcus jannaschii</name>
    <dbReference type="NCBI Taxonomy" id="243232"/>
    <lineage>
        <taxon>Archaea</taxon>
        <taxon>Methanobacteriati</taxon>
        <taxon>Methanobacteriota</taxon>
        <taxon>Methanomada group</taxon>
        <taxon>Methanococci</taxon>
        <taxon>Methanococcales</taxon>
        <taxon>Methanocaldococcaceae</taxon>
        <taxon>Methanocaldococcus</taxon>
    </lineage>
</organism>
<sequence>MPKKFDDIVNEMDRKIELLGEEIIKNLNLSVEGYCTNKKDICNLVIYKNNNIIKNLESLEMYSVKALCLYRPVSKDLRKLLTIIKLCSMLEKIEECAVKISFVLLNSKFNFDRNDKYIKRMASLTEEIIY</sequence>
<gene>
    <name type="ordered locus">MJ1011</name>
</gene>
<protein>
    <recommendedName>
        <fullName>Uncharacterized protein MJ1011</fullName>
    </recommendedName>
</protein>
<proteinExistence type="predicted"/>
<keyword id="KW-1185">Reference proteome</keyword>
<reference key="1">
    <citation type="journal article" date="1996" name="Science">
        <title>Complete genome sequence of the methanogenic archaeon, Methanococcus jannaschii.</title>
        <authorList>
            <person name="Bult C.J."/>
            <person name="White O."/>
            <person name="Olsen G.J."/>
            <person name="Zhou L."/>
            <person name="Fleischmann R.D."/>
            <person name="Sutton G.G."/>
            <person name="Blake J.A."/>
            <person name="FitzGerald L.M."/>
            <person name="Clayton R.A."/>
            <person name="Gocayne J.D."/>
            <person name="Kerlavage A.R."/>
            <person name="Dougherty B.A."/>
            <person name="Tomb J.-F."/>
            <person name="Adams M.D."/>
            <person name="Reich C.I."/>
            <person name="Overbeek R."/>
            <person name="Kirkness E.F."/>
            <person name="Weinstock K.G."/>
            <person name="Merrick J.M."/>
            <person name="Glodek A."/>
            <person name="Scott J.L."/>
            <person name="Geoghagen N.S.M."/>
            <person name="Weidman J.F."/>
            <person name="Fuhrmann J.L."/>
            <person name="Nguyen D."/>
            <person name="Utterback T.R."/>
            <person name="Kelley J.M."/>
            <person name="Peterson J.D."/>
            <person name="Sadow P.W."/>
            <person name="Hanna M.C."/>
            <person name="Cotton M.D."/>
            <person name="Roberts K.M."/>
            <person name="Hurst M.A."/>
            <person name="Kaine B.P."/>
            <person name="Borodovsky M."/>
            <person name="Klenk H.-P."/>
            <person name="Fraser C.M."/>
            <person name="Smith H.O."/>
            <person name="Woese C.R."/>
            <person name="Venter J.C."/>
        </authorList>
    </citation>
    <scope>NUCLEOTIDE SEQUENCE [LARGE SCALE GENOMIC DNA]</scope>
    <source>
        <strain>ATCC 43067 / DSM 2661 / JAL-1 / JCM 10045 / NBRC 100440</strain>
    </source>
</reference>
<feature type="chain" id="PRO_0000107141" description="Uncharacterized protein MJ1011">
    <location>
        <begin position="1"/>
        <end position="130"/>
    </location>
</feature>